<reference key="1">
    <citation type="journal article" date="2003" name="Genome Res.">
        <title>Comparative genome analysis of Vibrio vulnificus, a marine pathogen.</title>
        <authorList>
            <person name="Chen C.-Y."/>
            <person name="Wu K.-M."/>
            <person name="Chang Y.-C."/>
            <person name="Chang C.-H."/>
            <person name="Tsai H.-C."/>
            <person name="Liao T.-L."/>
            <person name="Liu Y.-M."/>
            <person name="Chen H.-J."/>
            <person name="Shen A.B.-T."/>
            <person name="Li J.-C."/>
            <person name="Su T.-L."/>
            <person name="Shao C.-P."/>
            <person name="Lee C.-T."/>
            <person name="Hor L.-I."/>
            <person name="Tsai S.-F."/>
        </authorList>
    </citation>
    <scope>NUCLEOTIDE SEQUENCE [LARGE SCALE GENOMIC DNA]</scope>
    <source>
        <strain>YJ016</strain>
    </source>
</reference>
<gene>
    <name evidence="1" type="primary">nqrB</name>
    <name type="ordered locus">VV2589</name>
</gene>
<evidence type="ECO:0000255" key="1">
    <source>
        <dbReference type="HAMAP-Rule" id="MF_00426"/>
    </source>
</evidence>
<protein>
    <recommendedName>
        <fullName evidence="1">Na(+)-translocating NADH-quinone reductase subunit B</fullName>
        <shortName evidence="1">Na(+)-NQR subunit B</shortName>
        <shortName evidence="1">Na(+)-translocating NQR subunit B</shortName>
        <ecNumber evidence="1">7.2.1.1</ecNumber>
    </recommendedName>
    <alternativeName>
        <fullName evidence="1">NQR complex subunit B</fullName>
    </alternativeName>
    <alternativeName>
        <fullName evidence="1">NQR-1 subunit B</fullName>
    </alternativeName>
</protein>
<sequence>MGLKKFLEDIEHHFEPGGKHEKWFALYEAAATLFYTPGLVTKKSSHVRDSVDLKRIMIMVWFAVFPAMFWGMYNAGGQAIAALNHMYAGDQLAQIIAGNWHYWLTEMLGGTISADASWGSKMLLGATYFLPIYATVFLVGGFWEVLFCMVRKHEVNEGFFVTSILFALIVPPTLPLWQAALGITFGVVVAKEIFGGTGRNFLNPALAGRAFLFFAYPAQISGDVVWTAADGFSGATALSQWAQGGNSALVNTVTGAPITWLDAFIGNIPGSIGEVSTLALLIGAAMIVYMRIASWRIIAGVMIGMIVVSTLFNVIGSDTNAMFSMPWHWHLVLGGFAFGMFFMATDPVSASFTNKGKWWYGILIGAMCVMIRVVNPAYPEGMMLAILFANLFAPLFDHLVVEKNIKRRQARYGK</sequence>
<accession>Q7MIC8</accession>
<organism>
    <name type="scientific">Vibrio vulnificus (strain YJ016)</name>
    <dbReference type="NCBI Taxonomy" id="196600"/>
    <lineage>
        <taxon>Bacteria</taxon>
        <taxon>Pseudomonadati</taxon>
        <taxon>Pseudomonadota</taxon>
        <taxon>Gammaproteobacteria</taxon>
        <taxon>Vibrionales</taxon>
        <taxon>Vibrionaceae</taxon>
        <taxon>Vibrio</taxon>
    </lineage>
</organism>
<keyword id="KW-0997">Cell inner membrane</keyword>
<keyword id="KW-1003">Cell membrane</keyword>
<keyword id="KW-0285">Flavoprotein</keyword>
<keyword id="KW-0288">FMN</keyword>
<keyword id="KW-0406">Ion transport</keyword>
<keyword id="KW-0472">Membrane</keyword>
<keyword id="KW-0520">NAD</keyword>
<keyword id="KW-0597">Phosphoprotein</keyword>
<keyword id="KW-0915">Sodium</keyword>
<keyword id="KW-0739">Sodium transport</keyword>
<keyword id="KW-1278">Translocase</keyword>
<keyword id="KW-0812">Transmembrane</keyword>
<keyword id="KW-1133">Transmembrane helix</keyword>
<keyword id="KW-0813">Transport</keyword>
<keyword id="KW-0830">Ubiquinone</keyword>
<dbReference type="EC" id="7.2.1.1" evidence="1"/>
<dbReference type="EMBL" id="BA000037">
    <property type="protein sequence ID" value="BAC95353.1"/>
    <property type="molecule type" value="Genomic_DNA"/>
</dbReference>
<dbReference type="RefSeq" id="WP_011079728.1">
    <property type="nucleotide sequence ID" value="NC_005139.1"/>
</dbReference>
<dbReference type="SMR" id="Q7MIC8"/>
<dbReference type="STRING" id="672.VV93_v1c23070"/>
<dbReference type="KEGG" id="vvy:VV2589"/>
<dbReference type="eggNOG" id="COG1805">
    <property type="taxonomic scope" value="Bacteria"/>
</dbReference>
<dbReference type="HOGENOM" id="CLU_042020_1_1_6"/>
<dbReference type="Proteomes" id="UP000002675">
    <property type="component" value="Chromosome I"/>
</dbReference>
<dbReference type="GO" id="GO:0005886">
    <property type="term" value="C:plasma membrane"/>
    <property type="evidence" value="ECO:0007669"/>
    <property type="project" value="UniProtKB-SubCell"/>
</dbReference>
<dbReference type="GO" id="GO:0010181">
    <property type="term" value="F:FMN binding"/>
    <property type="evidence" value="ECO:0007669"/>
    <property type="project" value="InterPro"/>
</dbReference>
<dbReference type="GO" id="GO:0016655">
    <property type="term" value="F:oxidoreductase activity, acting on NAD(P)H, quinone or similar compound as acceptor"/>
    <property type="evidence" value="ECO:0007669"/>
    <property type="project" value="UniProtKB-UniRule"/>
</dbReference>
<dbReference type="GO" id="GO:0022904">
    <property type="term" value="P:respiratory electron transport chain"/>
    <property type="evidence" value="ECO:0007669"/>
    <property type="project" value="InterPro"/>
</dbReference>
<dbReference type="GO" id="GO:0006814">
    <property type="term" value="P:sodium ion transport"/>
    <property type="evidence" value="ECO:0007669"/>
    <property type="project" value="UniProtKB-UniRule"/>
</dbReference>
<dbReference type="GO" id="GO:0055085">
    <property type="term" value="P:transmembrane transport"/>
    <property type="evidence" value="ECO:0007669"/>
    <property type="project" value="InterPro"/>
</dbReference>
<dbReference type="HAMAP" id="MF_00426">
    <property type="entry name" value="NqrB"/>
    <property type="match status" value="1"/>
</dbReference>
<dbReference type="InterPro" id="IPR010966">
    <property type="entry name" value="NqrB"/>
</dbReference>
<dbReference type="InterPro" id="IPR004338">
    <property type="entry name" value="NqrB/RnfD"/>
</dbReference>
<dbReference type="NCBIfam" id="TIGR01937">
    <property type="entry name" value="nqrB"/>
    <property type="match status" value="1"/>
</dbReference>
<dbReference type="NCBIfam" id="NF003756">
    <property type="entry name" value="PRK05349.1"/>
    <property type="match status" value="1"/>
</dbReference>
<dbReference type="PANTHER" id="PTHR30578">
    <property type="entry name" value="ELECTRON TRANSPORT COMPLEX PROTEIN RNFD"/>
    <property type="match status" value="1"/>
</dbReference>
<dbReference type="PANTHER" id="PTHR30578:SF1">
    <property type="entry name" value="NA(+)-TRANSLOCATING NADH-QUINONE REDUCTASE SUBUNIT B"/>
    <property type="match status" value="1"/>
</dbReference>
<dbReference type="Pfam" id="PF03116">
    <property type="entry name" value="NQR2_RnfD_RnfE"/>
    <property type="match status" value="1"/>
</dbReference>
<dbReference type="PIRSF" id="PIRSF016055">
    <property type="entry name" value="NADH-UbQ_OxRdtase_B_su"/>
    <property type="match status" value="1"/>
</dbReference>
<name>NQRB_VIBVY</name>
<proteinExistence type="inferred from homology"/>
<comment type="function">
    <text evidence="1">NQR complex catalyzes the reduction of ubiquinone-1 to ubiquinol by two successive reactions, coupled with the transport of Na(+) ions from the cytoplasm to the periplasm. NqrA to NqrE are probably involved in the second step, the conversion of ubisemiquinone to ubiquinol.</text>
</comment>
<comment type="catalytic activity">
    <reaction evidence="1">
        <text>a ubiquinone + n Na(+)(in) + NADH + H(+) = a ubiquinol + n Na(+)(out) + NAD(+)</text>
        <dbReference type="Rhea" id="RHEA:47748"/>
        <dbReference type="Rhea" id="RHEA-COMP:9565"/>
        <dbReference type="Rhea" id="RHEA-COMP:9566"/>
        <dbReference type="ChEBI" id="CHEBI:15378"/>
        <dbReference type="ChEBI" id="CHEBI:16389"/>
        <dbReference type="ChEBI" id="CHEBI:17976"/>
        <dbReference type="ChEBI" id="CHEBI:29101"/>
        <dbReference type="ChEBI" id="CHEBI:57540"/>
        <dbReference type="ChEBI" id="CHEBI:57945"/>
        <dbReference type="EC" id="7.2.1.1"/>
    </reaction>
</comment>
<comment type="cofactor">
    <cofactor evidence="1">
        <name>FMN</name>
        <dbReference type="ChEBI" id="CHEBI:58210"/>
    </cofactor>
</comment>
<comment type="subunit">
    <text evidence="1">Composed of six subunits; NqrA, NqrB, NqrC, NqrD, NqrE and NqrF.</text>
</comment>
<comment type="subcellular location">
    <subcellularLocation>
        <location evidence="1">Cell inner membrane</location>
        <topology evidence="1">Multi-pass membrane protein</topology>
    </subcellularLocation>
</comment>
<comment type="similarity">
    <text evidence="1">Belongs to the NqrB/RnfD family.</text>
</comment>
<feature type="chain" id="PRO_0000074448" description="Na(+)-translocating NADH-quinone reductase subunit B">
    <location>
        <begin position="1"/>
        <end position="414"/>
    </location>
</feature>
<feature type="transmembrane region" description="Helical" evidence="1">
    <location>
        <begin position="23"/>
        <end position="40"/>
    </location>
</feature>
<feature type="transmembrane region" description="Helical" evidence="1">
    <location>
        <begin position="56"/>
        <end position="76"/>
    </location>
</feature>
<feature type="transmembrane region" description="Helical" evidence="1">
    <location>
        <begin position="129"/>
        <end position="149"/>
    </location>
</feature>
<feature type="transmembrane region" description="Helical" evidence="1">
    <location>
        <begin position="164"/>
        <end position="184"/>
    </location>
</feature>
<feature type="transmembrane region" description="Helical" evidence="1">
    <location>
        <begin position="268"/>
        <end position="288"/>
    </location>
</feature>
<feature type="transmembrane region" description="Helical" evidence="1">
    <location>
        <begin position="297"/>
        <end position="317"/>
    </location>
</feature>
<feature type="transmembrane region" description="Helical" evidence="1">
    <location>
        <begin position="322"/>
        <end position="342"/>
    </location>
</feature>
<feature type="transmembrane region" description="Helical" evidence="1">
    <location>
        <begin position="358"/>
        <end position="378"/>
    </location>
</feature>
<feature type="transmembrane region" description="Helical" evidence="1">
    <location>
        <begin position="381"/>
        <end position="401"/>
    </location>
</feature>
<feature type="modified residue" description="FMN phosphoryl threonine" evidence="1">
    <location>
        <position position="236"/>
    </location>
</feature>